<gene>
    <name type="primary">CD3E</name>
</gene>
<feature type="signal peptide" evidence="3">
    <location>
        <begin position="1"/>
        <end position="21"/>
    </location>
</feature>
<feature type="chain" id="PRO_0000014605" description="T-cell surface glycoprotein CD3 epsilon chain">
    <location>
        <begin position="22"/>
        <end position="202"/>
    </location>
</feature>
<feature type="topological domain" description="Extracellular" evidence="3">
    <location>
        <begin position="22"/>
        <end position="122"/>
    </location>
</feature>
<feature type="transmembrane region" description="Helical" evidence="3">
    <location>
        <begin position="123"/>
        <end position="143"/>
    </location>
</feature>
<feature type="topological domain" description="Cytoplasmic" evidence="3">
    <location>
        <begin position="144"/>
        <end position="202"/>
    </location>
</feature>
<feature type="domain" description="Ig-like">
    <location>
        <begin position="37"/>
        <end position="107"/>
    </location>
</feature>
<feature type="domain" description="ITAM" evidence="5">
    <location>
        <begin position="173"/>
        <end position="200"/>
    </location>
</feature>
<feature type="region of interest" description="Disordered" evidence="6">
    <location>
        <begin position="156"/>
        <end position="202"/>
    </location>
</feature>
<feature type="region of interest" description="NUMB-binding region" evidence="1">
    <location>
        <begin position="170"/>
        <end position="187"/>
    </location>
</feature>
<feature type="region of interest" description="Proline-rich sequence" evidence="1">
    <location>
        <begin position="174"/>
        <end position="181"/>
    </location>
</feature>
<feature type="compositionally biased region" description="Polar residues" evidence="6">
    <location>
        <begin position="192"/>
        <end position="202"/>
    </location>
</feature>
<feature type="modified residue" description="Phosphotyrosine" evidence="1 5">
    <location>
        <position position="183"/>
    </location>
</feature>
<feature type="modified residue" description="Phosphotyrosine" evidence="1 5">
    <location>
        <position position="194"/>
    </location>
</feature>
<feature type="disulfide bond" evidence="4">
    <location>
        <begin position="54"/>
        <end position="96"/>
    </location>
</feature>
<accession>P27597</accession>
<evidence type="ECO:0000250" key="1">
    <source>
        <dbReference type="UniProtKB" id="P07766"/>
    </source>
</evidence>
<evidence type="ECO:0000250" key="2">
    <source>
        <dbReference type="UniProtKB" id="P22646"/>
    </source>
</evidence>
<evidence type="ECO:0000255" key="3"/>
<evidence type="ECO:0000255" key="4">
    <source>
        <dbReference type="PROSITE-ProRule" id="PRU00114"/>
    </source>
</evidence>
<evidence type="ECO:0000255" key="5">
    <source>
        <dbReference type="PROSITE-ProRule" id="PRU00379"/>
    </source>
</evidence>
<evidence type="ECO:0000256" key="6">
    <source>
        <dbReference type="SAM" id="MobiDB-lite"/>
    </source>
</evidence>
<comment type="function">
    <text evidence="1 2">Part of the TCR-CD3 complex present on T-lymphocyte cell surface that plays an essential role in adaptive immune response. When antigen presenting cells (APCs) activate T-cell receptor (TCR), TCR-mediated signals are transmitted across the cell membrane by the CD3 chains CD3D, CD3E, CD3G and CD3Z. All CD3 chains contain immunoreceptor tyrosine-based activation motifs (ITAMs) in their cytoplasmic domain. Upon TCR engagement, these motifs become phosphorylated by Src family protein tyrosine kinases LCK and FYN, resulting in the activation of downstream signaling pathways. In addition of this role of signal transduction in T-cell activation, CD3E plays an essential role in correct T-cell development. Also participates in internalization and cell surface down-regulation of TCR-CD3 complexes via endocytosis sequences present in CD3E cytosolic region (By similarity). In addition to its role as a TCR coreceptor, it serves as a receptor for ITPRIPL1. Ligand recognition inhibits T-cell activation by promoting interaction with NCK1, which prevents CD3E-ZAP70 interaction and blocks the ERK-NFkB signaling cascade and calcium influx (By similarity).</text>
</comment>
<comment type="subunit">
    <text evidence="1 2">The TCR-CD3 complex is composed of a CD3D/CD3E and a CD3G/CD3E heterodimers that preferentially associate with TCRalpha and TCRbeta, respectively, to form TCRalpha/CD3E/CD3G and TCRbeta/CD3G/CD3E trimers. In turn, the hexamer interacts with CD3Z homodimer to form the TCR-CD3 complex. Alternatively, TCRalpha and TCRbeta can be replaced by TCRgamma and TCRdelta. Interacts with CD6. Interacts (via Proline-rich sequence) with NCK1; the interaction is ligand dependent but independent of tyrosine kinase activation.</text>
</comment>
<comment type="subcellular location">
    <subcellularLocation>
        <location evidence="1">Cell membrane</location>
        <topology evidence="1">Single-pass type I membrane protein</topology>
    </subcellularLocation>
</comment>
<comment type="PTM">
    <text evidence="1">Phosphorylated on Tyr residues after T-cell receptor triggering by LCK in association with CD4/CD8.</text>
</comment>
<dbReference type="EMBL" id="M55410">
    <property type="protein sequence ID" value="AAA30834.1"/>
    <property type="molecule type" value="mRNA"/>
</dbReference>
<dbReference type="PIR" id="I46195">
    <property type="entry name" value="I46195"/>
</dbReference>
<dbReference type="RefSeq" id="NP_001003379.1">
    <property type="nucleotide sequence ID" value="NM_001003379.1"/>
</dbReference>
<dbReference type="RefSeq" id="XP_038364988.1">
    <property type="nucleotide sequence ID" value="XM_038509060.1"/>
</dbReference>
<dbReference type="RefSeq" id="XP_038391928.1">
    <property type="nucleotide sequence ID" value="XM_038536000.1"/>
</dbReference>
<dbReference type="SMR" id="P27597"/>
<dbReference type="FunCoup" id="P27597">
    <property type="interactions" value="162"/>
</dbReference>
<dbReference type="STRING" id="9615.ENSCAFP00000052947"/>
<dbReference type="PaxDb" id="9612-ENSCAFP00000018835"/>
<dbReference type="Ensembl" id="ENSCAFT00000020302.5">
    <property type="protein sequence ID" value="ENSCAFP00000018835.3"/>
    <property type="gene ID" value="ENSCAFG00000012802.5"/>
</dbReference>
<dbReference type="Ensembl" id="ENSCAFT00030015394.1">
    <property type="protein sequence ID" value="ENSCAFP00030013424.1"/>
    <property type="gene ID" value="ENSCAFG00030008350.1"/>
</dbReference>
<dbReference type="Ensembl" id="ENSCAFT00040002328.1">
    <property type="protein sequence ID" value="ENSCAFP00040001989.1"/>
    <property type="gene ID" value="ENSCAFG00040001243.1"/>
</dbReference>
<dbReference type="GeneID" id="442981"/>
<dbReference type="VGNC" id="VGNC:38955">
    <property type="gene designation" value="CD3E"/>
</dbReference>
<dbReference type="eggNOG" id="ENOG502S8KB">
    <property type="taxonomic scope" value="Eukaryota"/>
</dbReference>
<dbReference type="HOGENOM" id="CLU_117945_0_0_1"/>
<dbReference type="InParanoid" id="P27597"/>
<dbReference type="OMA" id="RVVLTCP"/>
<dbReference type="OrthoDB" id="9947847at2759"/>
<dbReference type="TreeFam" id="TF335892"/>
<dbReference type="Reactome" id="R-CFA-198933">
    <property type="pathway name" value="Immunoregulatory interactions between a Lymphoid and a non-Lymphoid cell"/>
</dbReference>
<dbReference type="Reactome" id="R-CFA-202424">
    <property type="pathway name" value="Downstream TCR signaling"/>
</dbReference>
<dbReference type="Reactome" id="R-CFA-202427">
    <property type="pathway name" value="Phosphorylation of CD3 and TCR zeta chains"/>
</dbReference>
<dbReference type="Reactome" id="R-CFA-202430">
    <property type="pathway name" value="Translocation of ZAP-70 to Immunological synapse"/>
</dbReference>
<dbReference type="Reactome" id="R-CFA-202433">
    <property type="pathway name" value="Generation of second messenger molecules"/>
</dbReference>
<dbReference type="Reactome" id="R-CFA-389948">
    <property type="pathway name" value="Co-inhibition by PD-1"/>
</dbReference>
<dbReference type="Proteomes" id="UP000002254">
    <property type="component" value="Chromosome 5"/>
</dbReference>
<dbReference type="Proteomes" id="UP000694429">
    <property type="component" value="Chromosome 5"/>
</dbReference>
<dbReference type="Proteomes" id="UP000694542">
    <property type="component" value="Chromosome 5"/>
</dbReference>
<dbReference type="Proteomes" id="UP000805418">
    <property type="component" value="Unplaced"/>
</dbReference>
<dbReference type="Bgee" id="ENSCAFG00000012802">
    <property type="expression patterns" value="Expressed in thymus and 41 other cell types or tissues"/>
</dbReference>
<dbReference type="GO" id="GO:0042105">
    <property type="term" value="C:alpha-beta T cell receptor complex"/>
    <property type="evidence" value="ECO:0000318"/>
    <property type="project" value="GO_Central"/>
</dbReference>
<dbReference type="GO" id="GO:0009897">
    <property type="term" value="C:external side of plasma membrane"/>
    <property type="evidence" value="ECO:0000318"/>
    <property type="project" value="GO_Central"/>
</dbReference>
<dbReference type="GO" id="GO:0004888">
    <property type="term" value="F:transmembrane signaling receptor activity"/>
    <property type="evidence" value="ECO:0000318"/>
    <property type="project" value="GO_Central"/>
</dbReference>
<dbReference type="GO" id="GO:0002250">
    <property type="term" value="P:adaptive immune response"/>
    <property type="evidence" value="ECO:0007669"/>
    <property type="project" value="UniProtKB-KW"/>
</dbReference>
<dbReference type="GO" id="GO:0007166">
    <property type="term" value="P:cell surface receptor signaling pathway"/>
    <property type="evidence" value="ECO:0000318"/>
    <property type="project" value="GO_Central"/>
</dbReference>
<dbReference type="GO" id="GO:0045059">
    <property type="term" value="P:positive thymic T cell selection"/>
    <property type="evidence" value="ECO:0000318"/>
    <property type="project" value="GO_Central"/>
</dbReference>
<dbReference type="CDD" id="cd07692">
    <property type="entry name" value="IgC1_CD3_epsilon"/>
    <property type="match status" value="1"/>
</dbReference>
<dbReference type="Gene3D" id="2.60.40.10">
    <property type="entry name" value="Immunoglobulins"/>
    <property type="match status" value="1"/>
</dbReference>
<dbReference type="InterPro" id="IPR015484">
    <property type="entry name" value="CD3_esu/gsu/dsu"/>
</dbReference>
<dbReference type="InterPro" id="IPR007110">
    <property type="entry name" value="Ig-like_dom"/>
</dbReference>
<dbReference type="InterPro" id="IPR013783">
    <property type="entry name" value="Ig-like_fold"/>
</dbReference>
<dbReference type="InterPro" id="IPR003598">
    <property type="entry name" value="Ig_sub2"/>
</dbReference>
<dbReference type="InterPro" id="IPR003110">
    <property type="entry name" value="Phos_immunorcpt_sig_ITAM"/>
</dbReference>
<dbReference type="PANTHER" id="PTHR10570:SF9">
    <property type="entry name" value="T-CELL SURFACE GLYCOPROTEIN CD3 EPSILON CHAIN"/>
    <property type="match status" value="1"/>
</dbReference>
<dbReference type="PANTHER" id="PTHR10570">
    <property type="entry name" value="T-CELL SURFACE GLYCOPROTEIN CD3 GAMMA CHAIN / DELTA CHAIN"/>
    <property type="match status" value="1"/>
</dbReference>
<dbReference type="Pfam" id="PF16681">
    <property type="entry name" value="Ig_5"/>
    <property type="match status" value="1"/>
</dbReference>
<dbReference type="Pfam" id="PF02189">
    <property type="entry name" value="ITAM"/>
    <property type="match status" value="1"/>
</dbReference>
<dbReference type="SMART" id="SM00408">
    <property type="entry name" value="IGc2"/>
    <property type="match status" value="1"/>
</dbReference>
<dbReference type="SMART" id="SM00077">
    <property type="entry name" value="ITAM"/>
    <property type="match status" value="1"/>
</dbReference>
<dbReference type="PROSITE" id="PS50835">
    <property type="entry name" value="IG_LIKE"/>
    <property type="match status" value="1"/>
</dbReference>
<dbReference type="PROSITE" id="PS51055">
    <property type="entry name" value="ITAM_1"/>
    <property type="match status" value="1"/>
</dbReference>
<organism>
    <name type="scientific">Canis lupus familiaris</name>
    <name type="common">Dog</name>
    <name type="synonym">Canis familiaris</name>
    <dbReference type="NCBI Taxonomy" id="9615"/>
    <lineage>
        <taxon>Eukaryota</taxon>
        <taxon>Metazoa</taxon>
        <taxon>Chordata</taxon>
        <taxon>Craniata</taxon>
        <taxon>Vertebrata</taxon>
        <taxon>Euteleostomi</taxon>
        <taxon>Mammalia</taxon>
        <taxon>Eutheria</taxon>
        <taxon>Laurasiatheria</taxon>
        <taxon>Carnivora</taxon>
        <taxon>Caniformia</taxon>
        <taxon>Canidae</taxon>
        <taxon>Canis</taxon>
    </lineage>
</organism>
<sequence length="202" mass="22642">MQSRNLWRILGLCLLSVGAWGQDEDFKASDDLTSISPEKRFKVSISGTEVVVTCPDVFGYDNIKWEKNDNLVEGASNRELSQKEFSEVDDSGYYACYADSIKEKSYLYLRARVCANCIEVNLMAVVTIIVADICLTLGLLLMVYYWSKTRKANAKPVMRGTGAGSRPRGQNKEKPPPVPNPDYEPIRKGQQDLYSGLNQRGI</sequence>
<proteinExistence type="evidence at transcript level"/>
<protein>
    <recommendedName>
        <fullName>T-cell surface glycoprotein CD3 epsilon chain</fullName>
    </recommendedName>
    <cdAntigenName>CD3e</cdAntigenName>
</protein>
<name>CD3E_CANLF</name>
<reference key="1">
    <citation type="journal article" date="1991" name="Immunogenetics">
        <title>Molecular cloning of the CD3 epsilon subunit of the T-cell receptor/CD3 complex in dog.</title>
        <authorList>
            <person name="Nash R.A."/>
            <person name="Scherf U."/>
            <person name="Storb R."/>
        </authorList>
    </citation>
    <scope>NUCLEOTIDE SEQUENCE [MRNA]</scope>
</reference>
<keyword id="KW-1064">Adaptive immunity</keyword>
<keyword id="KW-1003">Cell membrane</keyword>
<keyword id="KW-1015">Disulfide bond</keyword>
<keyword id="KW-0391">Immunity</keyword>
<keyword id="KW-0393">Immunoglobulin domain</keyword>
<keyword id="KW-0472">Membrane</keyword>
<keyword id="KW-0597">Phosphoprotein</keyword>
<keyword id="KW-0675">Receptor</keyword>
<keyword id="KW-1185">Reference proteome</keyword>
<keyword id="KW-0732">Signal</keyword>
<keyword id="KW-0812">Transmembrane</keyword>
<keyword id="KW-1133">Transmembrane helix</keyword>